<feature type="chain" id="PRO_1000072629" description="Chaperonin GroEL">
    <location>
        <begin position="1"/>
        <end position="545"/>
    </location>
</feature>
<feature type="binding site" evidence="1">
    <location>
        <begin position="29"/>
        <end position="32"/>
    </location>
    <ligand>
        <name>ATP</name>
        <dbReference type="ChEBI" id="CHEBI:30616"/>
    </ligand>
</feature>
<feature type="binding site" evidence="1">
    <location>
        <position position="50"/>
    </location>
    <ligand>
        <name>ATP</name>
        <dbReference type="ChEBI" id="CHEBI:30616"/>
    </ligand>
</feature>
<feature type="binding site" evidence="1">
    <location>
        <begin position="86"/>
        <end position="90"/>
    </location>
    <ligand>
        <name>ATP</name>
        <dbReference type="ChEBI" id="CHEBI:30616"/>
    </ligand>
</feature>
<feature type="binding site" evidence="1">
    <location>
        <position position="414"/>
    </location>
    <ligand>
        <name>ATP</name>
        <dbReference type="ChEBI" id="CHEBI:30616"/>
    </ligand>
</feature>
<feature type="binding site" evidence="1">
    <location>
        <begin position="477"/>
        <end position="479"/>
    </location>
    <ligand>
        <name>ATP</name>
        <dbReference type="ChEBI" id="CHEBI:30616"/>
    </ligand>
</feature>
<feature type="binding site" evidence="1">
    <location>
        <position position="493"/>
    </location>
    <ligand>
        <name>ATP</name>
        <dbReference type="ChEBI" id="CHEBI:30616"/>
    </ligand>
</feature>
<comment type="function">
    <text evidence="1">Together with its co-chaperonin GroES, plays an essential role in assisting protein folding. The GroEL-GroES system forms a nano-cage that allows encapsulation of the non-native substrate proteins and provides a physical environment optimized to promote and accelerate protein folding.</text>
</comment>
<comment type="catalytic activity">
    <reaction evidence="1">
        <text>ATP + H2O + a folded polypeptide = ADP + phosphate + an unfolded polypeptide.</text>
        <dbReference type="EC" id="5.6.1.7"/>
    </reaction>
</comment>
<comment type="subunit">
    <text evidence="1">Forms a cylinder of 14 subunits composed of two heptameric rings stacked back-to-back. Interacts with the co-chaperonin GroES.</text>
</comment>
<comment type="subcellular location">
    <subcellularLocation>
        <location evidence="1">Cytoplasm</location>
    </subcellularLocation>
</comment>
<comment type="similarity">
    <text evidence="1">Belongs to the chaperonin (HSP60) family.</text>
</comment>
<dbReference type="EC" id="5.6.1.7" evidence="1"/>
<dbReference type="EMBL" id="CP000814">
    <property type="protein sequence ID" value="ABV52763.1"/>
    <property type="molecule type" value="Genomic_DNA"/>
</dbReference>
<dbReference type="RefSeq" id="WP_002859291.1">
    <property type="nucleotide sequence ID" value="NC_009839.1"/>
</dbReference>
<dbReference type="SMR" id="A8FMS6"/>
<dbReference type="KEGG" id="cju:C8J_1164"/>
<dbReference type="HOGENOM" id="CLU_016503_3_0_7"/>
<dbReference type="GO" id="GO:0005737">
    <property type="term" value="C:cytoplasm"/>
    <property type="evidence" value="ECO:0007669"/>
    <property type="project" value="UniProtKB-SubCell"/>
</dbReference>
<dbReference type="GO" id="GO:0005524">
    <property type="term" value="F:ATP binding"/>
    <property type="evidence" value="ECO:0007669"/>
    <property type="project" value="UniProtKB-UniRule"/>
</dbReference>
<dbReference type="GO" id="GO:0140662">
    <property type="term" value="F:ATP-dependent protein folding chaperone"/>
    <property type="evidence" value="ECO:0007669"/>
    <property type="project" value="InterPro"/>
</dbReference>
<dbReference type="GO" id="GO:0016853">
    <property type="term" value="F:isomerase activity"/>
    <property type="evidence" value="ECO:0007669"/>
    <property type="project" value="UniProtKB-KW"/>
</dbReference>
<dbReference type="GO" id="GO:0051082">
    <property type="term" value="F:unfolded protein binding"/>
    <property type="evidence" value="ECO:0007669"/>
    <property type="project" value="UniProtKB-UniRule"/>
</dbReference>
<dbReference type="GO" id="GO:0042026">
    <property type="term" value="P:protein refolding"/>
    <property type="evidence" value="ECO:0007669"/>
    <property type="project" value="UniProtKB-UniRule"/>
</dbReference>
<dbReference type="CDD" id="cd03344">
    <property type="entry name" value="GroEL"/>
    <property type="match status" value="1"/>
</dbReference>
<dbReference type="FunFam" id="3.50.7.10:FF:000001">
    <property type="entry name" value="60 kDa chaperonin"/>
    <property type="match status" value="1"/>
</dbReference>
<dbReference type="Gene3D" id="3.50.7.10">
    <property type="entry name" value="GroEL"/>
    <property type="match status" value="1"/>
</dbReference>
<dbReference type="Gene3D" id="1.10.560.10">
    <property type="entry name" value="GroEL-like equatorial domain"/>
    <property type="match status" value="1"/>
</dbReference>
<dbReference type="Gene3D" id="3.30.260.10">
    <property type="entry name" value="TCP-1-like chaperonin intermediate domain"/>
    <property type="match status" value="1"/>
</dbReference>
<dbReference type="HAMAP" id="MF_00600">
    <property type="entry name" value="CH60"/>
    <property type="match status" value="1"/>
</dbReference>
<dbReference type="InterPro" id="IPR018370">
    <property type="entry name" value="Chaperonin_Cpn60_CS"/>
</dbReference>
<dbReference type="InterPro" id="IPR001844">
    <property type="entry name" value="Cpn60/GroEL"/>
</dbReference>
<dbReference type="InterPro" id="IPR002423">
    <property type="entry name" value="Cpn60/GroEL/TCP-1"/>
</dbReference>
<dbReference type="InterPro" id="IPR027409">
    <property type="entry name" value="GroEL-like_apical_dom_sf"/>
</dbReference>
<dbReference type="InterPro" id="IPR027413">
    <property type="entry name" value="GROEL-like_equatorial_sf"/>
</dbReference>
<dbReference type="InterPro" id="IPR027410">
    <property type="entry name" value="TCP-1-like_intermed_sf"/>
</dbReference>
<dbReference type="NCBIfam" id="TIGR02348">
    <property type="entry name" value="GroEL"/>
    <property type="match status" value="1"/>
</dbReference>
<dbReference type="NCBIfam" id="NF000592">
    <property type="entry name" value="PRK00013.1"/>
    <property type="match status" value="1"/>
</dbReference>
<dbReference type="NCBIfam" id="NF009487">
    <property type="entry name" value="PRK12849.1"/>
    <property type="match status" value="1"/>
</dbReference>
<dbReference type="NCBIfam" id="NF009488">
    <property type="entry name" value="PRK12850.1"/>
    <property type="match status" value="1"/>
</dbReference>
<dbReference type="NCBIfam" id="NF009489">
    <property type="entry name" value="PRK12851.1"/>
    <property type="match status" value="1"/>
</dbReference>
<dbReference type="PANTHER" id="PTHR45633">
    <property type="entry name" value="60 KDA HEAT SHOCK PROTEIN, MITOCHONDRIAL"/>
    <property type="match status" value="1"/>
</dbReference>
<dbReference type="Pfam" id="PF00118">
    <property type="entry name" value="Cpn60_TCP1"/>
    <property type="match status" value="1"/>
</dbReference>
<dbReference type="PRINTS" id="PR00298">
    <property type="entry name" value="CHAPERONIN60"/>
</dbReference>
<dbReference type="SUPFAM" id="SSF52029">
    <property type="entry name" value="GroEL apical domain-like"/>
    <property type="match status" value="1"/>
</dbReference>
<dbReference type="SUPFAM" id="SSF48592">
    <property type="entry name" value="GroEL equatorial domain-like"/>
    <property type="match status" value="1"/>
</dbReference>
<dbReference type="SUPFAM" id="SSF54849">
    <property type="entry name" value="GroEL-intermediate domain like"/>
    <property type="match status" value="1"/>
</dbReference>
<dbReference type="PROSITE" id="PS00296">
    <property type="entry name" value="CHAPERONINS_CPN60"/>
    <property type="match status" value="1"/>
</dbReference>
<proteinExistence type="inferred from homology"/>
<evidence type="ECO:0000255" key="1">
    <source>
        <dbReference type="HAMAP-Rule" id="MF_00600"/>
    </source>
</evidence>
<gene>
    <name evidence="1" type="primary">groEL</name>
    <name evidence="1" type="synonym">groL</name>
    <name type="ordered locus">C8J_1164</name>
</gene>
<keyword id="KW-0067">ATP-binding</keyword>
<keyword id="KW-0143">Chaperone</keyword>
<keyword id="KW-0963">Cytoplasm</keyword>
<keyword id="KW-0413">Isomerase</keyword>
<keyword id="KW-0547">Nucleotide-binding</keyword>
<name>CH60_CAMJ8</name>
<protein>
    <recommendedName>
        <fullName evidence="1">Chaperonin GroEL</fullName>
        <ecNumber evidence="1">5.6.1.7</ecNumber>
    </recommendedName>
    <alternativeName>
        <fullName evidence="1">60 kDa chaperonin</fullName>
    </alternativeName>
    <alternativeName>
        <fullName evidence="1">Chaperonin-60</fullName>
        <shortName evidence="1">Cpn60</shortName>
    </alternativeName>
</protein>
<organism>
    <name type="scientific">Campylobacter jejuni subsp. jejuni serotype O:6 (strain 81116 / NCTC 11828)</name>
    <dbReference type="NCBI Taxonomy" id="407148"/>
    <lineage>
        <taxon>Bacteria</taxon>
        <taxon>Pseudomonadati</taxon>
        <taxon>Campylobacterota</taxon>
        <taxon>Epsilonproteobacteria</taxon>
        <taxon>Campylobacterales</taxon>
        <taxon>Campylobacteraceae</taxon>
        <taxon>Campylobacter</taxon>
    </lineage>
</organism>
<reference key="1">
    <citation type="journal article" date="2007" name="J. Bacteriol.">
        <title>The complete genome sequence of Campylobacter jejuni strain 81116 (NCTC11828).</title>
        <authorList>
            <person name="Pearson B.M."/>
            <person name="Gaskin D.J.H."/>
            <person name="Segers R.P.A.M."/>
            <person name="Wells J.M."/>
            <person name="Nuijten P.J.M."/>
            <person name="van Vliet A.H.M."/>
        </authorList>
    </citation>
    <scope>NUCLEOTIDE SEQUENCE [LARGE SCALE GENOMIC DNA]</scope>
    <source>
        <strain>81116 / NCTC 11828</strain>
    </source>
</reference>
<accession>A8FMS6</accession>
<sequence length="545" mass="57911">MAKEIIFSDEARNKLYEGVKKLNDAVKVTMGPRGRNVLIQKSFGAPSITKDGVSVAKEVELKDSLENMGASLVREVASKTADQAGDGTTTATVLAHAIFKEGLRNITAGANPIEVKRGMDKACEAIVAELKKLSREVKDKKEIAQVATISANSDEKIGNLIADAMEKVGKDGVITVEEAKSINDELNVVEGMQFDRGYLSPYFITNAEKMTVELSSPYILLFDKKIANLKDLLPVLEQIQKTGKPLLIIAEDIEGEALATLVVNKLRGVLNISAVKAPGFGDRRKAMLEDIAILTGGEVISEELGRTLESATIQDLGQASSVIIDKDNTTIVNGAGEKANIDARVNQIKAQIAETTSDYDREKLQERLAKLSGGVAVIKVGAATETEMKEKKDRVDDALSATKAAVEEGIVIGGGAALIKAKAKIKLDLQGDEAIGAAIVERALRAPLRQIAENAGFDAGVVVNSVENAKDENTGFDAAKGEYVNMLESGIIDPVKVERVALLNAVSVASMLLTTEATISEIKEDKPAMPDMSGMGGMGGMGGMM</sequence>